<comment type="catalytic activity">
    <reaction evidence="1">
        <text>tRNA(Leu) + L-leucine + ATP = L-leucyl-tRNA(Leu) + AMP + diphosphate</text>
        <dbReference type="Rhea" id="RHEA:11688"/>
        <dbReference type="Rhea" id="RHEA-COMP:9613"/>
        <dbReference type="Rhea" id="RHEA-COMP:9622"/>
        <dbReference type="ChEBI" id="CHEBI:30616"/>
        <dbReference type="ChEBI" id="CHEBI:33019"/>
        <dbReference type="ChEBI" id="CHEBI:57427"/>
        <dbReference type="ChEBI" id="CHEBI:78442"/>
        <dbReference type="ChEBI" id="CHEBI:78494"/>
        <dbReference type="ChEBI" id="CHEBI:456215"/>
        <dbReference type="EC" id="6.1.1.4"/>
    </reaction>
</comment>
<comment type="subcellular location">
    <subcellularLocation>
        <location evidence="1">Cytoplasm</location>
    </subcellularLocation>
</comment>
<comment type="similarity">
    <text evidence="1">Belongs to the class-I aminoacyl-tRNA synthetase family.</text>
</comment>
<gene>
    <name evidence="1" type="primary">leuS</name>
    <name type="ordered locus">ESA_02686</name>
</gene>
<accession>A7MQS0</accession>
<reference key="1">
    <citation type="journal article" date="2010" name="PLoS ONE">
        <title>Genome sequence of Cronobacter sakazakii BAA-894 and comparative genomic hybridization analysis with other Cronobacter species.</title>
        <authorList>
            <person name="Kucerova E."/>
            <person name="Clifton S.W."/>
            <person name="Xia X.Q."/>
            <person name="Long F."/>
            <person name="Porwollik S."/>
            <person name="Fulton L."/>
            <person name="Fronick C."/>
            <person name="Minx P."/>
            <person name="Kyung K."/>
            <person name="Warren W."/>
            <person name="Fulton R."/>
            <person name="Feng D."/>
            <person name="Wollam A."/>
            <person name="Shah N."/>
            <person name="Bhonagiri V."/>
            <person name="Nash W.E."/>
            <person name="Hallsworth-Pepin K."/>
            <person name="Wilson R.K."/>
            <person name="McClelland M."/>
            <person name="Forsythe S.J."/>
        </authorList>
    </citation>
    <scope>NUCLEOTIDE SEQUENCE [LARGE SCALE GENOMIC DNA]</scope>
    <source>
        <strain>ATCC BAA-894</strain>
    </source>
</reference>
<keyword id="KW-0030">Aminoacyl-tRNA synthetase</keyword>
<keyword id="KW-0067">ATP-binding</keyword>
<keyword id="KW-0963">Cytoplasm</keyword>
<keyword id="KW-0436">Ligase</keyword>
<keyword id="KW-0547">Nucleotide-binding</keyword>
<keyword id="KW-0648">Protein biosynthesis</keyword>
<keyword id="KW-1185">Reference proteome</keyword>
<protein>
    <recommendedName>
        <fullName evidence="1">Leucine--tRNA ligase</fullName>
        <ecNumber evidence="1">6.1.1.4</ecNumber>
    </recommendedName>
    <alternativeName>
        <fullName evidence="1">Leucyl-tRNA synthetase</fullName>
        <shortName evidence="1">LeuRS</shortName>
    </alternativeName>
</protein>
<evidence type="ECO:0000255" key="1">
    <source>
        <dbReference type="HAMAP-Rule" id="MF_00049"/>
    </source>
</evidence>
<dbReference type="EC" id="6.1.1.4" evidence="1"/>
<dbReference type="EMBL" id="CP000783">
    <property type="protein sequence ID" value="ABU77918.1"/>
    <property type="molecule type" value="Genomic_DNA"/>
</dbReference>
<dbReference type="SMR" id="A7MQS0"/>
<dbReference type="KEGG" id="esa:ESA_02686"/>
<dbReference type="HOGENOM" id="CLU_004427_0_0_6"/>
<dbReference type="Proteomes" id="UP000000260">
    <property type="component" value="Chromosome"/>
</dbReference>
<dbReference type="GO" id="GO:0005829">
    <property type="term" value="C:cytosol"/>
    <property type="evidence" value="ECO:0007669"/>
    <property type="project" value="TreeGrafter"/>
</dbReference>
<dbReference type="GO" id="GO:0002161">
    <property type="term" value="F:aminoacyl-tRNA deacylase activity"/>
    <property type="evidence" value="ECO:0007669"/>
    <property type="project" value="InterPro"/>
</dbReference>
<dbReference type="GO" id="GO:0005524">
    <property type="term" value="F:ATP binding"/>
    <property type="evidence" value="ECO:0007669"/>
    <property type="project" value="UniProtKB-UniRule"/>
</dbReference>
<dbReference type="GO" id="GO:0004823">
    <property type="term" value="F:leucine-tRNA ligase activity"/>
    <property type="evidence" value="ECO:0007669"/>
    <property type="project" value="UniProtKB-UniRule"/>
</dbReference>
<dbReference type="GO" id="GO:0006429">
    <property type="term" value="P:leucyl-tRNA aminoacylation"/>
    <property type="evidence" value="ECO:0007669"/>
    <property type="project" value="UniProtKB-UniRule"/>
</dbReference>
<dbReference type="CDD" id="cd07958">
    <property type="entry name" value="Anticodon_Ia_Leu_BEm"/>
    <property type="match status" value="1"/>
</dbReference>
<dbReference type="CDD" id="cd00812">
    <property type="entry name" value="LeuRS_core"/>
    <property type="match status" value="1"/>
</dbReference>
<dbReference type="FunFam" id="1.10.730.10:FF:000002">
    <property type="entry name" value="Leucine--tRNA ligase"/>
    <property type="match status" value="2"/>
</dbReference>
<dbReference type="FunFam" id="2.20.28.290:FF:000001">
    <property type="entry name" value="Leucine--tRNA ligase"/>
    <property type="match status" value="1"/>
</dbReference>
<dbReference type="FunFam" id="3.10.20.590:FF:000001">
    <property type="entry name" value="Leucine--tRNA ligase"/>
    <property type="match status" value="1"/>
</dbReference>
<dbReference type="FunFam" id="3.40.50.620:FF:000003">
    <property type="entry name" value="Leucine--tRNA ligase"/>
    <property type="match status" value="1"/>
</dbReference>
<dbReference type="FunFam" id="3.40.50.620:FF:000124">
    <property type="entry name" value="Leucine--tRNA ligase"/>
    <property type="match status" value="1"/>
</dbReference>
<dbReference type="Gene3D" id="2.20.28.290">
    <property type="match status" value="1"/>
</dbReference>
<dbReference type="Gene3D" id="3.10.20.590">
    <property type="match status" value="1"/>
</dbReference>
<dbReference type="Gene3D" id="3.40.50.620">
    <property type="entry name" value="HUPs"/>
    <property type="match status" value="2"/>
</dbReference>
<dbReference type="Gene3D" id="1.10.730.10">
    <property type="entry name" value="Isoleucyl-tRNA Synthetase, Domain 1"/>
    <property type="match status" value="1"/>
</dbReference>
<dbReference type="HAMAP" id="MF_00049_B">
    <property type="entry name" value="Leu_tRNA_synth_B"/>
    <property type="match status" value="1"/>
</dbReference>
<dbReference type="InterPro" id="IPR001412">
    <property type="entry name" value="aa-tRNA-synth_I_CS"/>
</dbReference>
<dbReference type="InterPro" id="IPR002300">
    <property type="entry name" value="aa-tRNA-synth_Ia"/>
</dbReference>
<dbReference type="InterPro" id="IPR002302">
    <property type="entry name" value="Leu-tRNA-ligase"/>
</dbReference>
<dbReference type="InterPro" id="IPR025709">
    <property type="entry name" value="Leu_tRNA-synth_edit"/>
</dbReference>
<dbReference type="InterPro" id="IPR013155">
    <property type="entry name" value="M/V/L/I-tRNA-synth_anticd-bd"/>
</dbReference>
<dbReference type="InterPro" id="IPR015413">
    <property type="entry name" value="Methionyl/Leucyl_tRNA_Synth"/>
</dbReference>
<dbReference type="InterPro" id="IPR014729">
    <property type="entry name" value="Rossmann-like_a/b/a_fold"/>
</dbReference>
<dbReference type="InterPro" id="IPR009080">
    <property type="entry name" value="tRNAsynth_Ia_anticodon-bd"/>
</dbReference>
<dbReference type="InterPro" id="IPR009008">
    <property type="entry name" value="Val/Leu/Ile-tRNA-synth_edit"/>
</dbReference>
<dbReference type="NCBIfam" id="TIGR00396">
    <property type="entry name" value="leuS_bact"/>
    <property type="match status" value="1"/>
</dbReference>
<dbReference type="PANTHER" id="PTHR43740:SF2">
    <property type="entry name" value="LEUCINE--TRNA LIGASE, MITOCHONDRIAL"/>
    <property type="match status" value="1"/>
</dbReference>
<dbReference type="PANTHER" id="PTHR43740">
    <property type="entry name" value="LEUCYL-TRNA SYNTHETASE"/>
    <property type="match status" value="1"/>
</dbReference>
<dbReference type="Pfam" id="PF08264">
    <property type="entry name" value="Anticodon_1"/>
    <property type="match status" value="1"/>
</dbReference>
<dbReference type="Pfam" id="PF00133">
    <property type="entry name" value="tRNA-synt_1"/>
    <property type="match status" value="2"/>
</dbReference>
<dbReference type="Pfam" id="PF13603">
    <property type="entry name" value="tRNA-synt_1_2"/>
    <property type="match status" value="1"/>
</dbReference>
<dbReference type="Pfam" id="PF09334">
    <property type="entry name" value="tRNA-synt_1g"/>
    <property type="match status" value="1"/>
</dbReference>
<dbReference type="PRINTS" id="PR00985">
    <property type="entry name" value="TRNASYNTHLEU"/>
</dbReference>
<dbReference type="SUPFAM" id="SSF47323">
    <property type="entry name" value="Anticodon-binding domain of a subclass of class I aminoacyl-tRNA synthetases"/>
    <property type="match status" value="1"/>
</dbReference>
<dbReference type="SUPFAM" id="SSF52374">
    <property type="entry name" value="Nucleotidylyl transferase"/>
    <property type="match status" value="1"/>
</dbReference>
<dbReference type="SUPFAM" id="SSF50677">
    <property type="entry name" value="ValRS/IleRS/LeuRS editing domain"/>
    <property type="match status" value="1"/>
</dbReference>
<dbReference type="PROSITE" id="PS00178">
    <property type="entry name" value="AA_TRNA_LIGASE_I"/>
    <property type="match status" value="1"/>
</dbReference>
<name>SYL_CROS8</name>
<organism>
    <name type="scientific">Cronobacter sakazakii (strain ATCC BAA-894)</name>
    <name type="common">Enterobacter sakazakii</name>
    <dbReference type="NCBI Taxonomy" id="290339"/>
    <lineage>
        <taxon>Bacteria</taxon>
        <taxon>Pseudomonadati</taxon>
        <taxon>Pseudomonadota</taxon>
        <taxon>Gammaproteobacteria</taxon>
        <taxon>Enterobacterales</taxon>
        <taxon>Enterobacteriaceae</taxon>
        <taxon>Cronobacter</taxon>
    </lineage>
</organism>
<sequence>MQEQYRPEEIESKVQLHWEEKRTFEVTEDESKEKYYCLSMLPYPSGRLHMGHVRNYTIGDVIARYQRMLGKNVLQPIGWDAFGLPAEGAAVKNNTAPAPWTYDNINYMKNQLKMLGFGYDWSRELATCTPEYYRWEQQFFTELYKKGLVYKKTSAVNWCPNDQTVLANEQVIDGCCWRCDTKVERKEIPQWFIKITAYADELLNDLDKLDHWPDTVKTMQRNWIGRSEGVEITFDVQNSDEKLTVYTTRPDTFMGVTYLAVAAGHPLAQAAAAANPALGDFIAECRNTKVAEADMATMEKKGVDTGLKAIHPLTGEAIPVWAANFVLMEYGTGAVMAVPGHDQRDYEFATKYSLPIKPVILTAEGTAPDLSEQALTEKGVLFNSGEFDGLDFEAAFNAIADKLAAKGVGERKVNYRLRDWGVSRQRYWGAPIPMVTLEDGTVMPTPADQLPVILPEDVVMDGITSPIKADPEWAKTTVNGQPALRETDTFDTFMESSWYYARYTCPQYKEGMLDEKAANYWLPVDIYIGGIEHAIMHLLYFRFFHKLMRDAGMVNSDEPAKQLLCQGMVLADAFYYVGANGERNWVSPKDAIVERDEKGRIVKASDAAGHELVYTGMSKMSKSKNNGIDPQEMVERYGADTVRLFMMFASPADMTLEWQESGVEGANRFLKRVWRLVYEHTSLGDAPALNVDALNDDQKALRRDVHKTIAKVSDDIGRRQTFNTAIAAIMELMNKLAKAPQEGEQDRALMREALLAVVRMLNPFTPHVSFTLWQELKGEGDIDNAPWPQADDSAMVEDTTLVVVQVNGKVRGKITVAADATEEQVRERAAQEHLVAKYLAGVTVRKVIYVPGKLLNLVVG</sequence>
<proteinExistence type="inferred from homology"/>
<feature type="chain" id="PRO_1000009338" description="Leucine--tRNA ligase">
    <location>
        <begin position="1"/>
        <end position="860"/>
    </location>
</feature>
<feature type="short sequence motif" description="'HIGH' region">
    <location>
        <begin position="42"/>
        <end position="52"/>
    </location>
</feature>
<feature type="short sequence motif" description="'KMSKS' region">
    <location>
        <begin position="619"/>
        <end position="623"/>
    </location>
</feature>
<feature type="binding site" evidence="1">
    <location>
        <position position="622"/>
    </location>
    <ligand>
        <name>ATP</name>
        <dbReference type="ChEBI" id="CHEBI:30616"/>
    </ligand>
</feature>